<comment type="function">
    <text evidence="2">Required during biogenesis of c-type cytochromes (cytochrome c6 and cytochrome f) at the step of heme attachment.</text>
</comment>
<comment type="subunit">
    <text evidence="1">May interact with ccs1.</text>
</comment>
<comment type="subcellular location">
    <subcellularLocation>
        <location evidence="2">Cellular thylakoid membrane</location>
        <topology evidence="2">Multi-pass membrane protein</topology>
    </subcellularLocation>
</comment>
<comment type="similarity">
    <text evidence="2">Belongs to the CcmF/CycK/Ccl1/NrfE/CcsA family.</text>
</comment>
<dbReference type="EMBL" id="AP008231">
    <property type="protein sequence ID" value="BAD79199.1"/>
    <property type="molecule type" value="Genomic_DNA"/>
</dbReference>
<dbReference type="SMR" id="Q5N3C1"/>
<dbReference type="DNASU" id="3198975"/>
<dbReference type="KEGG" id="syc:syc1009_d"/>
<dbReference type="eggNOG" id="COG0755">
    <property type="taxonomic scope" value="Bacteria"/>
</dbReference>
<dbReference type="Proteomes" id="UP000001175">
    <property type="component" value="Chromosome"/>
</dbReference>
<dbReference type="GO" id="GO:0031676">
    <property type="term" value="C:plasma membrane-derived thylakoid membrane"/>
    <property type="evidence" value="ECO:0007669"/>
    <property type="project" value="UniProtKB-SubCell"/>
</dbReference>
<dbReference type="GO" id="GO:0020037">
    <property type="term" value="F:heme binding"/>
    <property type="evidence" value="ECO:0007669"/>
    <property type="project" value="InterPro"/>
</dbReference>
<dbReference type="GO" id="GO:0017004">
    <property type="term" value="P:cytochrome complex assembly"/>
    <property type="evidence" value="ECO:0007669"/>
    <property type="project" value="UniProtKB-UniRule"/>
</dbReference>
<dbReference type="HAMAP" id="MF_01391">
    <property type="entry name" value="CytC_CcsA"/>
    <property type="match status" value="1"/>
</dbReference>
<dbReference type="InterPro" id="IPR002541">
    <property type="entry name" value="Cyt_c_assembly"/>
</dbReference>
<dbReference type="InterPro" id="IPR017562">
    <property type="entry name" value="Cyt_c_biogenesis_CcsA"/>
</dbReference>
<dbReference type="InterPro" id="IPR045062">
    <property type="entry name" value="Cyt_c_biogenesis_CcsA/CcmC"/>
</dbReference>
<dbReference type="NCBIfam" id="TIGR03144">
    <property type="entry name" value="cytochr_II_ccsB"/>
    <property type="match status" value="1"/>
</dbReference>
<dbReference type="PANTHER" id="PTHR30071:SF1">
    <property type="entry name" value="CYTOCHROME B_B6 PROTEIN-RELATED"/>
    <property type="match status" value="1"/>
</dbReference>
<dbReference type="PANTHER" id="PTHR30071">
    <property type="entry name" value="HEME EXPORTER PROTEIN C"/>
    <property type="match status" value="1"/>
</dbReference>
<dbReference type="Pfam" id="PF01578">
    <property type="entry name" value="Cytochrom_C_asm"/>
    <property type="match status" value="1"/>
</dbReference>
<protein>
    <recommendedName>
        <fullName evidence="2">Cytochrome c biogenesis protein CcsA</fullName>
    </recommendedName>
</protein>
<keyword id="KW-0201">Cytochrome c-type biogenesis</keyword>
<keyword id="KW-0472">Membrane</keyword>
<keyword id="KW-0793">Thylakoid</keyword>
<keyword id="KW-0812">Transmembrane</keyword>
<keyword id="KW-1133">Transmembrane helix</keyword>
<proteinExistence type="inferred from homology"/>
<gene>
    <name evidence="2" type="primary">ccsA</name>
    <name type="ordered locus">syc1009_d</name>
</gene>
<evidence type="ECO:0000250" key="1"/>
<evidence type="ECO:0000255" key="2">
    <source>
        <dbReference type="HAMAP-Rule" id="MF_01391"/>
    </source>
</evidence>
<name>CCSA_SYNP6</name>
<feature type="chain" id="PRO_0000353715" description="Cytochrome c biogenesis protein CcsA">
    <location>
        <begin position="1"/>
        <end position="325"/>
    </location>
</feature>
<feature type="transmembrane region" description="Helical" evidence="2">
    <location>
        <begin position="14"/>
        <end position="34"/>
    </location>
</feature>
<feature type="transmembrane region" description="Helical" evidence="2">
    <location>
        <begin position="36"/>
        <end position="56"/>
    </location>
</feature>
<feature type="transmembrane region" description="Helical" evidence="2">
    <location>
        <begin position="68"/>
        <end position="88"/>
    </location>
</feature>
<feature type="transmembrane region" description="Helical" evidence="2">
    <location>
        <begin position="97"/>
        <end position="117"/>
    </location>
</feature>
<feature type="transmembrane region" description="Helical" evidence="2">
    <location>
        <begin position="142"/>
        <end position="162"/>
    </location>
</feature>
<feature type="transmembrane region" description="Helical" evidence="2">
    <location>
        <begin position="233"/>
        <end position="253"/>
    </location>
</feature>
<feature type="transmembrane region" description="Helical" evidence="2">
    <location>
        <begin position="260"/>
        <end position="280"/>
    </location>
</feature>
<feature type="transmembrane region" description="Helical" evidence="2">
    <location>
        <begin position="294"/>
        <end position="314"/>
    </location>
</feature>
<sequence>MNLVSLQNSLDNATFAILLPTLLCYWTGVAFPNLKGLPAIGTAGMAIANLCMAALLGARWLEAGYFPISNLYESLFFLAWGLTAIHLLAEKLSGSRLVGAATSPLALGIVAFAAFTLPKEMRQAEPLVPALKSNWLMMHVSVMMVSYAALLVGSLLSVAFLVVTRGQAIELRGSSVGTGSFRQVKLNRASDLTIATAESGGSGGTAVLEQPVLQLAPEQLSLADTLDNVSYRVIGLGFPLLTIGIIAGAVWANEAWGSYWSWDPKETWALITWLVFAAYLHARITRGWQGRRPAILATVGFGVVWVCYLGVNLLGKGLHSYGWFF</sequence>
<accession>Q5N3C1</accession>
<reference key="1">
    <citation type="journal article" date="2007" name="Photosyn. Res.">
        <title>Complete nucleotide sequence of the freshwater unicellular cyanobacterium Synechococcus elongatus PCC 6301 chromosome: gene content and organization.</title>
        <authorList>
            <person name="Sugita C."/>
            <person name="Ogata K."/>
            <person name="Shikata M."/>
            <person name="Jikuya H."/>
            <person name="Takano J."/>
            <person name="Furumichi M."/>
            <person name="Kanehisa M."/>
            <person name="Omata T."/>
            <person name="Sugiura M."/>
            <person name="Sugita M."/>
        </authorList>
    </citation>
    <scope>NUCLEOTIDE SEQUENCE [LARGE SCALE GENOMIC DNA]</scope>
    <source>
        <strain>ATCC 27144 / PCC 6301 / SAUG 1402/1</strain>
    </source>
</reference>
<organism>
    <name type="scientific">Synechococcus sp. (strain ATCC 27144 / PCC 6301 / SAUG 1402/1)</name>
    <name type="common">Anacystis nidulans</name>
    <dbReference type="NCBI Taxonomy" id="269084"/>
    <lineage>
        <taxon>Bacteria</taxon>
        <taxon>Bacillati</taxon>
        <taxon>Cyanobacteriota</taxon>
        <taxon>Cyanophyceae</taxon>
        <taxon>Synechococcales</taxon>
        <taxon>Synechococcaceae</taxon>
        <taxon>Synechococcus</taxon>
    </lineage>
</organism>